<evidence type="ECO:0000255" key="1">
    <source>
        <dbReference type="HAMAP-Rule" id="MF_00238"/>
    </source>
</evidence>
<feature type="chain" id="PRO_1000204455" description="Cytidylate kinase">
    <location>
        <begin position="1"/>
        <end position="225"/>
    </location>
</feature>
<feature type="binding site" evidence="1">
    <location>
        <begin position="12"/>
        <end position="20"/>
    </location>
    <ligand>
        <name>ATP</name>
        <dbReference type="ChEBI" id="CHEBI:30616"/>
    </ligand>
</feature>
<keyword id="KW-0067">ATP-binding</keyword>
<keyword id="KW-0963">Cytoplasm</keyword>
<keyword id="KW-0418">Kinase</keyword>
<keyword id="KW-0547">Nucleotide-binding</keyword>
<keyword id="KW-0808">Transferase</keyword>
<comment type="catalytic activity">
    <reaction evidence="1">
        <text>CMP + ATP = CDP + ADP</text>
        <dbReference type="Rhea" id="RHEA:11600"/>
        <dbReference type="ChEBI" id="CHEBI:30616"/>
        <dbReference type="ChEBI" id="CHEBI:58069"/>
        <dbReference type="ChEBI" id="CHEBI:60377"/>
        <dbReference type="ChEBI" id="CHEBI:456216"/>
        <dbReference type="EC" id="2.7.4.25"/>
    </reaction>
</comment>
<comment type="catalytic activity">
    <reaction evidence="1">
        <text>dCMP + ATP = dCDP + ADP</text>
        <dbReference type="Rhea" id="RHEA:25094"/>
        <dbReference type="ChEBI" id="CHEBI:30616"/>
        <dbReference type="ChEBI" id="CHEBI:57566"/>
        <dbReference type="ChEBI" id="CHEBI:58593"/>
        <dbReference type="ChEBI" id="CHEBI:456216"/>
        <dbReference type="EC" id="2.7.4.25"/>
    </reaction>
</comment>
<comment type="subcellular location">
    <subcellularLocation>
        <location evidence="1">Cytoplasm</location>
    </subcellularLocation>
</comment>
<comment type="similarity">
    <text evidence="1">Belongs to the cytidylate kinase family. Type 1 subfamily.</text>
</comment>
<sequence>MTVMAPVVTVDGPSGAGKGTLCKALAEALQWNLLDSGAIYRVLALAALHHHVDISSEDALVPLASHLDVRFVAEGGQLKVILEGEDVSHEIRTEAVGNTASQAAAFPRVREALLRRQRAFREAPGLIADGRDMGTVVFPDAPVKIFLDASAEERAQRRMLQLQGKGFNVNFERLLSEIKERDERDRNRPVAPLVPAADALVLDSTEMTIDEVIARALAYAREILA</sequence>
<proteinExistence type="inferred from homology"/>
<dbReference type="EC" id="2.7.4.25" evidence="1"/>
<dbReference type="EMBL" id="CP001657">
    <property type="protein sequence ID" value="ACT12775.1"/>
    <property type="molecule type" value="Genomic_DNA"/>
</dbReference>
<dbReference type="RefSeq" id="WP_015839987.1">
    <property type="nucleotide sequence ID" value="NC_012917.1"/>
</dbReference>
<dbReference type="SMR" id="C6DF66"/>
<dbReference type="STRING" id="561230.PC1_1734"/>
<dbReference type="GeneID" id="67793737"/>
<dbReference type="KEGG" id="pct:PC1_1734"/>
<dbReference type="eggNOG" id="COG0283">
    <property type="taxonomic scope" value="Bacteria"/>
</dbReference>
<dbReference type="HOGENOM" id="CLU_079959_0_2_6"/>
<dbReference type="OrthoDB" id="9807434at2"/>
<dbReference type="Proteomes" id="UP000002736">
    <property type="component" value="Chromosome"/>
</dbReference>
<dbReference type="GO" id="GO:0005829">
    <property type="term" value="C:cytosol"/>
    <property type="evidence" value="ECO:0007669"/>
    <property type="project" value="TreeGrafter"/>
</dbReference>
<dbReference type="GO" id="GO:0005524">
    <property type="term" value="F:ATP binding"/>
    <property type="evidence" value="ECO:0007669"/>
    <property type="project" value="UniProtKB-UniRule"/>
</dbReference>
<dbReference type="GO" id="GO:0036430">
    <property type="term" value="F:CMP kinase activity"/>
    <property type="evidence" value="ECO:0007669"/>
    <property type="project" value="RHEA"/>
</dbReference>
<dbReference type="GO" id="GO:0036431">
    <property type="term" value="F:dCMP kinase activity"/>
    <property type="evidence" value="ECO:0007669"/>
    <property type="project" value="RHEA"/>
</dbReference>
<dbReference type="GO" id="GO:0015949">
    <property type="term" value="P:nucleobase-containing small molecule interconversion"/>
    <property type="evidence" value="ECO:0007669"/>
    <property type="project" value="TreeGrafter"/>
</dbReference>
<dbReference type="GO" id="GO:0006220">
    <property type="term" value="P:pyrimidine nucleotide metabolic process"/>
    <property type="evidence" value="ECO:0007669"/>
    <property type="project" value="UniProtKB-UniRule"/>
</dbReference>
<dbReference type="CDD" id="cd02020">
    <property type="entry name" value="CMPK"/>
    <property type="match status" value="1"/>
</dbReference>
<dbReference type="FunFam" id="3.40.50.300:FF:000262">
    <property type="entry name" value="Cytidylate kinase"/>
    <property type="match status" value="1"/>
</dbReference>
<dbReference type="Gene3D" id="3.40.50.300">
    <property type="entry name" value="P-loop containing nucleotide triphosphate hydrolases"/>
    <property type="match status" value="1"/>
</dbReference>
<dbReference type="HAMAP" id="MF_00238">
    <property type="entry name" value="Cytidyl_kinase_type1"/>
    <property type="match status" value="1"/>
</dbReference>
<dbReference type="InterPro" id="IPR003136">
    <property type="entry name" value="Cytidylate_kin"/>
</dbReference>
<dbReference type="InterPro" id="IPR011994">
    <property type="entry name" value="Cytidylate_kinase_dom"/>
</dbReference>
<dbReference type="InterPro" id="IPR027417">
    <property type="entry name" value="P-loop_NTPase"/>
</dbReference>
<dbReference type="NCBIfam" id="TIGR00017">
    <property type="entry name" value="cmk"/>
    <property type="match status" value="1"/>
</dbReference>
<dbReference type="PANTHER" id="PTHR21299:SF2">
    <property type="entry name" value="CYTIDYLATE KINASE"/>
    <property type="match status" value="1"/>
</dbReference>
<dbReference type="PANTHER" id="PTHR21299">
    <property type="entry name" value="CYTIDYLATE KINASE/PANTOATE-BETA-ALANINE LIGASE"/>
    <property type="match status" value="1"/>
</dbReference>
<dbReference type="Pfam" id="PF02224">
    <property type="entry name" value="Cytidylate_kin"/>
    <property type="match status" value="1"/>
</dbReference>
<dbReference type="SUPFAM" id="SSF52540">
    <property type="entry name" value="P-loop containing nucleoside triphosphate hydrolases"/>
    <property type="match status" value="1"/>
</dbReference>
<name>KCY_PECCP</name>
<organism>
    <name type="scientific">Pectobacterium carotovorum subsp. carotovorum (strain PC1)</name>
    <dbReference type="NCBI Taxonomy" id="561230"/>
    <lineage>
        <taxon>Bacteria</taxon>
        <taxon>Pseudomonadati</taxon>
        <taxon>Pseudomonadota</taxon>
        <taxon>Gammaproteobacteria</taxon>
        <taxon>Enterobacterales</taxon>
        <taxon>Pectobacteriaceae</taxon>
        <taxon>Pectobacterium</taxon>
    </lineage>
</organism>
<protein>
    <recommendedName>
        <fullName evidence="1">Cytidylate kinase</fullName>
        <shortName evidence="1">CK</shortName>
        <ecNumber evidence="1">2.7.4.25</ecNumber>
    </recommendedName>
    <alternativeName>
        <fullName evidence="1">Cytidine monophosphate kinase</fullName>
        <shortName evidence="1">CMP kinase</shortName>
    </alternativeName>
</protein>
<gene>
    <name evidence="1" type="primary">cmk</name>
    <name type="ordered locus">PC1_1734</name>
</gene>
<reference key="1">
    <citation type="submission" date="2009-07" db="EMBL/GenBank/DDBJ databases">
        <title>Complete sequence of Pectobacterium carotovorum subsp. carotovorum PC1.</title>
        <authorList>
            <consortium name="US DOE Joint Genome Institute"/>
            <person name="Lucas S."/>
            <person name="Copeland A."/>
            <person name="Lapidus A."/>
            <person name="Glavina del Rio T."/>
            <person name="Tice H."/>
            <person name="Bruce D."/>
            <person name="Goodwin L."/>
            <person name="Pitluck S."/>
            <person name="Munk A.C."/>
            <person name="Brettin T."/>
            <person name="Detter J.C."/>
            <person name="Han C."/>
            <person name="Tapia R."/>
            <person name="Larimer F."/>
            <person name="Land M."/>
            <person name="Hauser L."/>
            <person name="Kyrpides N."/>
            <person name="Mikhailova N."/>
            <person name="Balakrishnan V."/>
            <person name="Glasner J."/>
            <person name="Perna N.T."/>
        </authorList>
    </citation>
    <scope>NUCLEOTIDE SEQUENCE [LARGE SCALE GENOMIC DNA]</scope>
    <source>
        <strain>PC1</strain>
    </source>
</reference>
<accession>C6DF66</accession>